<gene>
    <name evidence="1" type="primary">mdtI</name>
    <name type="ordered locus">YE2380</name>
</gene>
<comment type="function">
    <text evidence="1">Catalyzes the excretion of spermidine.</text>
</comment>
<comment type="subunit">
    <text evidence="1">Forms a complex with MdtJ.</text>
</comment>
<comment type="subcellular location">
    <subcellularLocation>
        <location evidence="1">Cell inner membrane</location>
        <topology evidence="1">Multi-pass membrane protein</topology>
    </subcellularLocation>
</comment>
<comment type="similarity">
    <text evidence="1">Belongs to the drug/metabolite transporter (DMT) superfamily. Small multidrug resistance (SMR) (TC 2.A.7.1) family. MdtI subfamily.</text>
</comment>
<comment type="sequence caution" evidence="2">
    <conflict type="erroneous initiation">
        <sequence resource="EMBL-CDS" id="CAL12432"/>
    </conflict>
</comment>
<dbReference type="EMBL" id="AM286415">
    <property type="protein sequence ID" value="CAL12432.1"/>
    <property type="status" value="ALT_INIT"/>
    <property type="molecule type" value="Genomic_DNA"/>
</dbReference>
<dbReference type="RefSeq" id="WP_005163022.1">
    <property type="nucleotide sequence ID" value="NC_008800.1"/>
</dbReference>
<dbReference type="RefSeq" id="YP_001006599.1">
    <property type="nucleotide sequence ID" value="NC_008800.1"/>
</dbReference>
<dbReference type="SMR" id="A1JRE5"/>
<dbReference type="GeneID" id="82551018"/>
<dbReference type="KEGG" id="yen:YE2380"/>
<dbReference type="PATRIC" id="fig|393305.7.peg.2534"/>
<dbReference type="eggNOG" id="COG2076">
    <property type="taxonomic scope" value="Bacteria"/>
</dbReference>
<dbReference type="HOGENOM" id="CLU_133067_0_4_6"/>
<dbReference type="OrthoDB" id="71834at2"/>
<dbReference type="Proteomes" id="UP000000642">
    <property type="component" value="Chromosome"/>
</dbReference>
<dbReference type="GO" id="GO:0005886">
    <property type="term" value="C:plasma membrane"/>
    <property type="evidence" value="ECO:0007669"/>
    <property type="project" value="UniProtKB-SubCell"/>
</dbReference>
<dbReference type="GO" id="GO:0015199">
    <property type="term" value="F:amino-acid betaine transmembrane transporter activity"/>
    <property type="evidence" value="ECO:0007669"/>
    <property type="project" value="TreeGrafter"/>
</dbReference>
<dbReference type="GO" id="GO:0015297">
    <property type="term" value="F:antiporter activity"/>
    <property type="evidence" value="ECO:0007669"/>
    <property type="project" value="TreeGrafter"/>
</dbReference>
<dbReference type="GO" id="GO:0015220">
    <property type="term" value="F:choline transmembrane transporter activity"/>
    <property type="evidence" value="ECO:0007669"/>
    <property type="project" value="TreeGrafter"/>
</dbReference>
<dbReference type="GO" id="GO:0015606">
    <property type="term" value="F:spermidine transmembrane transporter activity"/>
    <property type="evidence" value="ECO:0007669"/>
    <property type="project" value="UniProtKB-UniRule"/>
</dbReference>
<dbReference type="GO" id="GO:0031460">
    <property type="term" value="P:glycine betaine transport"/>
    <property type="evidence" value="ECO:0007669"/>
    <property type="project" value="TreeGrafter"/>
</dbReference>
<dbReference type="FunFam" id="1.10.3730.20:FF:000001">
    <property type="entry name" value="Quaternary ammonium compound resistance transporter SugE"/>
    <property type="match status" value="1"/>
</dbReference>
<dbReference type="Gene3D" id="1.10.3730.20">
    <property type="match status" value="1"/>
</dbReference>
<dbReference type="HAMAP" id="MF_01597">
    <property type="entry name" value="MdtI"/>
    <property type="match status" value="1"/>
</dbReference>
<dbReference type="InterPro" id="IPR000390">
    <property type="entry name" value="Small_drug/metabolite_transptr"/>
</dbReference>
<dbReference type="InterPro" id="IPR045324">
    <property type="entry name" value="Small_multidrug_res"/>
</dbReference>
<dbReference type="InterPro" id="IPR023737">
    <property type="entry name" value="Spermidine_export_MdtI"/>
</dbReference>
<dbReference type="NCBIfam" id="NF007934">
    <property type="entry name" value="PRK10650.1"/>
    <property type="match status" value="1"/>
</dbReference>
<dbReference type="PANTHER" id="PTHR30561">
    <property type="entry name" value="SMR FAMILY PROTON-DEPENDENT DRUG EFFLUX TRANSPORTER SUGE"/>
    <property type="match status" value="1"/>
</dbReference>
<dbReference type="PANTHER" id="PTHR30561:SF6">
    <property type="entry name" value="SPERMIDINE EXPORT PROTEIN MDTI"/>
    <property type="match status" value="1"/>
</dbReference>
<dbReference type="Pfam" id="PF00893">
    <property type="entry name" value="Multi_Drug_Res"/>
    <property type="match status" value="1"/>
</dbReference>
<dbReference type="SUPFAM" id="SSF103481">
    <property type="entry name" value="Multidrug resistance efflux transporter EmrE"/>
    <property type="match status" value="1"/>
</dbReference>
<evidence type="ECO:0000255" key="1">
    <source>
        <dbReference type="HAMAP-Rule" id="MF_01597"/>
    </source>
</evidence>
<evidence type="ECO:0000305" key="2"/>
<reference key="1">
    <citation type="journal article" date="2006" name="PLoS Genet.">
        <title>The complete genome sequence and comparative genome analysis of the high pathogenicity Yersinia enterocolitica strain 8081.</title>
        <authorList>
            <person name="Thomson N.R."/>
            <person name="Howard S."/>
            <person name="Wren B.W."/>
            <person name="Holden M.T.G."/>
            <person name="Crossman L."/>
            <person name="Challis G.L."/>
            <person name="Churcher C."/>
            <person name="Mungall K."/>
            <person name="Brooks K."/>
            <person name="Chillingworth T."/>
            <person name="Feltwell T."/>
            <person name="Abdellah Z."/>
            <person name="Hauser H."/>
            <person name="Jagels K."/>
            <person name="Maddison M."/>
            <person name="Moule S."/>
            <person name="Sanders M."/>
            <person name="Whitehead S."/>
            <person name="Quail M.A."/>
            <person name="Dougan G."/>
            <person name="Parkhill J."/>
            <person name="Prentice M.B."/>
        </authorList>
    </citation>
    <scope>NUCLEOTIDE SEQUENCE [LARGE SCALE GENOMIC DNA]</scope>
    <source>
        <strain>NCTC 13174 / 8081</strain>
    </source>
</reference>
<name>MDTI_YERE8</name>
<protein>
    <recommendedName>
        <fullName evidence="1">Spermidine export protein MdtI</fullName>
    </recommendedName>
</protein>
<keyword id="KW-0997">Cell inner membrane</keyword>
<keyword id="KW-1003">Cell membrane</keyword>
<keyword id="KW-0472">Membrane</keyword>
<keyword id="KW-0812">Transmembrane</keyword>
<keyword id="KW-1133">Transmembrane helix</keyword>
<keyword id="KW-0813">Transport</keyword>
<accession>A1JRE5</accession>
<sequence>MQQLEFYHIAFLILAVILEIIANILLKMSDGFRRVWLGILSLLSVLGAFSALAQAVKGIELSVAYALWGGFGIAATVAAGWILFNQRLNYKGWIGLILLLAGMVMIKLS</sequence>
<proteinExistence type="inferred from homology"/>
<organism>
    <name type="scientific">Yersinia enterocolitica serotype O:8 / biotype 1B (strain NCTC 13174 / 8081)</name>
    <dbReference type="NCBI Taxonomy" id="393305"/>
    <lineage>
        <taxon>Bacteria</taxon>
        <taxon>Pseudomonadati</taxon>
        <taxon>Pseudomonadota</taxon>
        <taxon>Gammaproteobacteria</taxon>
        <taxon>Enterobacterales</taxon>
        <taxon>Yersiniaceae</taxon>
        <taxon>Yersinia</taxon>
    </lineage>
</organism>
<feature type="chain" id="PRO_0000331156" description="Spermidine export protein MdtI">
    <location>
        <begin position="1"/>
        <end position="109"/>
    </location>
</feature>
<feature type="transmembrane region" description="Helical" evidence="1">
    <location>
        <begin position="6"/>
        <end position="26"/>
    </location>
</feature>
<feature type="transmembrane region" description="Helical" evidence="1">
    <location>
        <begin position="35"/>
        <end position="55"/>
    </location>
</feature>
<feature type="transmembrane region" description="Helical" evidence="1">
    <location>
        <begin position="64"/>
        <end position="84"/>
    </location>
</feature>
<feature type="transmembrane region" description="Helical" evidence="1">
    <location>
        <begin position="88"/>
        <end position="108"/>
    </location>
</feature>